<feature type="chain" id="PRO_0000125768" description="Large ribosomal subunit protein uL1">
    <location>
        <begin position="1"/>
        <end position="226"/>
    </location>
</feature>
<accession>O83266</accession>
<gene>
    <name evidence="1" type="primary">rplA</name>
    <name type="ordered locus">TP_0238</name>
</gene>
<name>RL1_TREPA</name>
<reference key="1">
    <citation type="journal article" date="1998" name="Science">
        <title>Complete genome sequence of Treponema pallidum, the syphilis spirochete.</title>
        <authorList>
            <person name="Fraser C.M."/>
            <person name="Norris S.J."/>
            <person name="Weinstock G.M."/>
            <person name="White O."/>
            <person name="Sutton G.G."/>
            <person name="Dodson R.J."/>
            <person name="Gwinn M.L."/>
            <person name="Hickey E.K."/>
            <person name="Clayton R.A."/>
            <person name="Ketchum K.A."/>
            <person name="Sodergren E."/>
            <person name="Hardham J.M."/>
            <person name="McLeod M.P."/>
            <person name="Salzberg S.L."/>
            <person name="Peterson J.D."/>
            <person name="Khalak H.G."/>
            <person name="Richardson D.L."/>
            <person name="Howell J.K."/>
            <person name="Chidambaram M."/>
            <person name="Utterback T.R."/>
            <person name="McDonald L.A."/>
            <person name="Artiach P."/>
            <person name="Bowman C."/>
            <person name="Cotton M.D."/>
            <person name="Fujii C."/>
            <person name="Garland S.A."/>
            <person name="Hatch B."/>
            <person name="Horst K."/>
            <person name="Roberts K.M."/>
            <person name="Sandusky M."/>
            <person name="Weidman J.F."/>
            <person name="Smith H.O."/>
            <person name="Venter J.C."/>
        </authorList>
    </citation>
    <scope>NUCLEOTIDE SEQUENCE [LARGE SCALE GENOMIC DNA]</scope>
    <source>
        <strain>Nichols</strain>
    </source>
</reference>
<dbReference type="EMBL" id="AE000520">
    <property type="protein sequence ID" value="AAC65226.1"/>
    <property type="molecule type" value="Genomic_DNA"/>
</dbReference>
<dbReference type="PIR" id="H71349">
    <property type="entry name" value="H71349"/>
</dbReference>
<dbReference type="RefSeq" id="WP_010881686.1">
    <property type="nucleotide sequence ID" value="NC_021490.2"/>
</dbReference>
<dbReference type="SMR" id="O83266"/>
<dbReference type="STRING" id="243276.TP_0238"/>
<dbReference type="EnsemblBacteria" id="AAC65226">
    <property type="protein sequence ID" value="AAC65226"/>
    <property type="gene ID" value="TP_0238"/>
</dbReference>
<dbReference type="GeneID" id="93876030"/>
<dbReference type="KEGG" id="tpa:TP_0238"/>
<dbReference type="KEGG" id="tpw:TPANIC_0238"/>
<dbReference type="eggNOG" id="COG0081">
    <property type="taxonomic scope" value="Bacteria"/>
</dbReference>
<dbReference type="HOGENOM" id="CLU_062853_0_0_12"/>
<dbReference type="OrthoDB" id="9803740at2"/>
<dbReference type="Proteomes" id="UP000000811">
    <property type="component" value="Chromosome"/>
</dbReference>
<dbReference type="GO" id="GO:0015934">
    <property type="term" value="C:large ribosomal subunit"/>
    <property type="evidence" value="ECO:0007669"/>
    <property type="project" value="InterPro"/>
</dbReference>
<dbReference type="GO" id="GO:0019843">
    <property type="term" value="F:rRNA binding"/>
    <property type="evidence" value="ECO:0007669"/>
    <property type="project" value="UniProtKB-UniRule"/>
</dbReference>
<dbReference type="GO" id="GO:0003735">
    <property type="term" value="F:structural constituent of ribosome"/>
    <property type="evidence" value="ECO:0007669"/>
    <property type="project" value="InterPro"/>
</dbReference>
<dbReference type="GO" id="GO:0000049">
    <property type="term" value="F:tRNA binding"/>
    <property type="evidence" value="ECO:0007669"/>
    <property type="project" value="UniProtKB-KW"/>
</dbReference>
<dbReference type="GO" id="GO:0006417">
    <property type="term" value="P:regulation of translation"/>
    <property type="evidence" value="ECO:0007669"/>
    <property type="project" value="UniProtKB-KW"/>
</dbReference>
<dbReference type="GO" id="GO:0006412">
    <property type="term" value="P:translation"/>
    <property type="evidence" value="ECO:0007669"/>
    <property type="project" value="UniProtKB-UniRule"/>
</dbReference>
<dbReference type="CDD" id="cd00403">
    <property type="entry name" value="Ribosomal_L1"/>
    <property type="match status" value="1"/>
</dbReference>
<dbReference type="FunFam" id="3.40.50.790:FF:000001">
    <property type="entry name" value="50S ribosomal protein L1"/>
    <property type="match status" value="1"/>
</dbReference>
<dbReference type="Gene3D" id="3.30.190.20">
    <property type="match status" value="1"/>
</dbReference>
<dbReference type="Gene3D" id="3.40.50.790">
    <property type="match status" value="1"/>
</dbReference>
<dbReference type="HAMAP" id="MF_01318_B">
    <property type="entry name" value="Ribosomal_uL1_B"/>
    <property type="match status" value="1"/>
</dbReference>
<dbReference type="InterPro" id="IPR005878">
    <property type="entry name" value="Ribosom_uL1_bac-type"/>
</dbReference>
<dbReference type="InterPro" id="IPR002143">
    <property type="entry name" value="Ribosomal_uL1"/>
</dbReference>
<dbReference type="InterPro" id="IPR023674">
    <property type="entry name" value="Ribosomal_uL1-like"/>
</dbReference>
<dbReference type="InterPro" id="IPR028364">
    <property type="entry name" value="Ribosomal_uL1/biogenesis"/>
</dbReference>
<dbReference type="InterPro" id="IPR016095">
    <property type="entry name" value="Ribosomal_uL1_3-a/b-sand"/>
</dbReference>
<dbReference type="InterPro" id="IPR023673">
    <property type="entry name" value="Ribosomal_uL1_CS"/>
</dbReference>
<dbReference type="NCBIfam" id="TIGR01169">
    <property type="entry name" value="rplA_bact"/>
    <property type="match status" value="1"/>
</dbReference>
<dbReference type="PANTHER" id="PTHR36427">
    <property type="entry name" value="54S RIBOSOMAL PROTEIN L1, MITOCHONDRIAL"/>
    <property type="match status" value="1"/>
</dbReference>
<dbReference type="PANTHER" id="PTHR36427:SF3">
    <property type="entry name" value="LARGE RIBOSOMAL SUBUNIT PROTEIN UL1M"/>
    <property type="match status" value="1"/>
</dbReference>
<dbReference type="Pfam" id="PF00687">
    <property type="entry name" value="Ribosomal_L1"/>
    <property type="match status" value="1"/>
</dbReference>
<dbReference type="PIRSF" id="PIRSF002155">
    <property type="entry name" value="Ribosomal_L1"/>
    <property type="match status" value="1"/>
</dbReference>
<dbReference type="SUPFAM" id="SSF56808">
    <property type="entry name" value="Ribosomal protein L1"/>
    <property type="match status" value="1"/>
</dbReference>
<dbReference type="PROSITE" id="PS01199">
    <property type="entry name" value="RIBOSOMAL_L1"/>
    <property type="match status" value="1"/>
</dbReference>
<keyword id="KW-1185">Reference proteome</keyword>
<keyword id="KW-0678">Repressor</keyword>
<keyword id="KW-0687">Ribonucleoprotein</keyword>
<keyword id="KW-0689">Ribosomal protein</keyword>
<keyword id="KW-0694">RNA-binding</keyword>
<keyword id="KW-0699">rRNA-binding</keyword>
<keyword id="KW-0810">Translation regulation</keyword>
<keyword id="KW-0820">tRNA-binding</keyword>
<organism>
    <name type="scientific">Treponema pallidum (strain Nichols)</name>
    <dbReference type="NCBI Taxonomy" id="243276"/>
    <lineage>
        <taxon>Bacteria</taxon>
        <taxon>Pseudomonadati</taxon>
        <taxon>Spirochaetota</taxon>
        <taxon>Spirochaetia</taxon>
        <taxon>Spirochaetales</taxon>
        <taxon>Treponemataceae</taxon>
        <taxon>Treponema</taxon>
    </lineage>
</organism>
<protein>
    <recommendedName>
        <fullName evidence="1">Large ribosomal subunit protein uL1</fullName>
    </recommendedName>
    <alternativeName>
        <fullName evidence="2">50S ribosomal protein L1</fullName>
    </alternativeName>
</protein>
<comment type="function">
    <text evidence="1">Binds directly to 23S rRNA. The L1 stalk is quite mobile in the ribosome, and is involved in E site tRNA release.</text>
</comment>
<comment type="function">
    <text evidence="1">Protein L1 is also a translational repressor protein, it controls the translation of the L11 operon by binding to its mRNA.</text>
</comment>
<comment type="subunit">
    <text evidence="1">Part of the 50S ribosomal subunit.</text>
</comment>
<comment type="similarity">
    <text evidence="1">Belongs to the universal ribosomal protein uL1 family.</text>
</comment>
<sequence length="226" mass="24977">MKRGKKYRAAVARYDRAERFSLDRAVGLLKEVRYASFDETVEVHVSLRLKKNQTVRDTVVLPHRFRAEVRVLVFCKEDRVSEALAAGAAYAGGAEYLEKVKGGWFDFDVVVASPDMMKDVGRLGMVLGRRGLMPNPRTGTVSADLGAAVCELKKGRVEFRADKTGVVHLAVGKTTMDSAQIVENVDVFLSEMDRKKPVDVKAGFVRSISLSSSMGPGIWVVHKSEE</sequence>
<evidence type="ECO:0000255" key="1">
    <source>
        <dbReference type="HAMAP-Rule" id="MF_01318"/>
    </source>
</evidence>
<evidence type="ECO:0000305" key="2"/>
<proteinExistence type="inferred from homology"/>